<proteinExistence type="inferred from homology"/>
<gene>
    <name type="ordered locus">UU265</name>
</gene>
<protein>
    <recommendedName>
        <fullName>UPF0154 protein UU265</fullName>
    </recommendedName>
</protein>
<reference key="1">
    <citation type="journal article" date="2000" name="Nature">
        <title>The complete sequence of the mucosal pathogen Ureaplasma urealyticum.</title>
        <authorList>
            <person name="Glass J.I."/>
            <person name="Lefkowitz E.J."/>
            <person name="Glass J.S."/>
            <person name="Heiner C.R."/>
            <person name="Chen E.Y."/>
            <person name="Cassell G.H."/>
        </authorList>
    </citation>
    <scope>NUCLEOTIDE SEQUENCE [LARGE SCALE GENOMIC DNA]</scope>
    <source>
        <strain>ATCC 700970</strain>
    </source>
</reference>
<organism>
    <name type="scientific">Ureaplasma parvum serovar 3 (strain ATCC 700970)</name>
    <dbReference type="NCBI Taxonomy" id="273119"/>
    <lineage>
        <taxon>Bacteria</taxon>
        <taxon>Bacillati</taxon>
        <taxon>Mycoplasmatota</taxon>
        <taxon>Mycoplasmoidales</taxon>
        <taxon>Mycoplasmoidaceae</taxon>
        <taxon>Ureaplasma</taxon>
    </lineage>
</organism>
<comment type="subcellular location">
    <subcellularLocation>
        <location evidence="2">Membrane</location>
        <topology evidence="2">Single-pass membrane protein</topology>
    </subcellularLocation>
</comment>
<comment type="similarity">
    <text evidence="2">Belongs to the UPF0154 family.</text>
</comment>
<keyword id="KW-0472">Membrane</keyword>
<keyword id="KW-1185">Reference proteome</keyword>
<keyword id="KW-0812">Transmembrane</keyword>
<keyword id="KW-1133">Transmembrane helix</keyword>
<dbReference type="EMBL" id="AF222894">
    <property type="protein sequence ID" value="AAF30674.1"/>
    <property type="molecule type" value="Genomic_DNA"/>
</dbReference>
<dbReference type="SMR" id="Q9PQM6"/>
<dbReference type="STRING" id="273119.UU265"/>
<dbReference type="EnsemblBacteria" id="AAF30674">
    <property type="protein sequence ID" value="AAF30674"/>
    <property type="gene ID" value="UU265"/>
</dbReference>
<dbReference type="KEGG" id="uur:UU265"/>
<dbReference type="eggNOG" id="COG3763">
    <property type="taxonomic scope" value="Bacteria"/>
</dbReference>
<dbReference type="HOGENOM" id="CLU_2182819_0_0_14"/>
<dbReference type="OrthoDB" id="1769076at2"/>
<dbReference type="Proteomes" id="UP000000423">
    <property type="component" value="Chromosome"/>
</dbReference>
<dbReference type="GO" id="GO:0016020">
    <property type="term" value="C:membrane"/>
    <property type="evidence" value="ECO:0007669"/>
    <property type="project" value="UniProtKB-SubCell"/>
</dbReference>
<dbReference type="HAMAP" id="MF_00363">
    <property type="entry name" value="UPF0154"/>
    <property type="match status" value="1"/>
</dbReference>
<dbReference type="InterPro" id="IPR005359">
    <property type="entry name" value="UPF0154"/>
</dbReference>
<dbReference type="Pfam" id="PF03672">
    <property type="entry name" value="UPF0154"/>
    <property type="match status" value="1"/>
</dbReference>
<name>Y265_UREPA</name>
<sequence>MNFSSFIFKVSDVFKSVIHEASDVVTKADLDNANAHTHSLAVGLGIGIVLFLIAGLIIGYFISMKIMKRQLKKNPPISKDTIRMIYQQVGRKPSESQINEIYNRAVKQK</sequence>
<accession>Q9PQM6</accession>
<feature type="chain" id="PRO_0000214992" description="UPF0154 protein UU265">
    <location>
        <begin position="1"/>
        <end position="109"/>
    </location>
</feature>
<feature type="transmembrane region" description="Helical" evidence="1">
    <location>
        <begin position="42"/>
        <end position="62"/>
    </location>
</feature>
<evidence type="ECO:0000255" key="1"/>
<evidence type="ECO:0000305" key="2"/>